<dbReference type="EC" id="5.3.1.6"/>
<dbReference type="EMBL" id="CU329670">
    <property type="protein sequence ID" value="CAB59692.1"/>
    <property type="molecule type" value="Genomic_DNA"/>
</dbReference>
<dbReference type="PIR" id="T37679">
    <property type="entry name" value="T37679"/>
</dbReference>
<dbReference type="RefSeq" id="NP_594673.1">
    <property type="nucleotide sequence ID" value="NM_001020102.2"/>
</dbReference>
<dbReference type="SMR" id="Q9UTL3"/>
<dbReference type="BioGRID" id="279268">
    <property type="interactions" value="4"/>
</dbReference>
<dbReference type="FunCoup" id="Q9UTL3">
    <property type="interactions" value="750"/>
</dbReference>
<dbReference type="STRING" id="284812.Q9UTL3"/>
<dbReference type="iPTMnet" id="Q9UTL3"/>
<dbReference type="PaxDb" id="4896-SPAC144.12.1"/>
<dbReference type="EnsemblFungi" id="SPAC144.12.1">
    <property type="protein sequence ID" value="SPAC144.12.1:pep"/>
    <property type="gene ID" value="SPAC144.12"/>
</dbReference>
<dbReference type="GeneID" id="2542821"/>
<dbReference type="KEGG" id="spo:2542821"/>
<dbReference type="PomBase" id="SPAC144.12">
    <property type="gene designation" value="rki1"/>
</dbReference>
<dbReference type="VEuPathDB" id="FungiDB:SPAC144.12"/>
<dbReference type="eggNOG" id="KOG3075">
    <property type="taxonomic scope" value="Eukaryota"/>
</dbReference>
<dbReference type="HOGENOM" id="CLU_056590_0_0_1"/>
<dbReference type="InParanoid" id="Q9UTL3"/>
<dbReference type="OMA" id="ACHVQEK"/>
<dbReference type="PhylomeDB" id="Q9UTL3"/>
<dbReference type="Reactome" id="R-SPO-71336">
    <property type="pathway name" value="Pentose phosphate pathway"/>
</dbReference>
<dbReference type="UniPathway" id="UPA00115">
    <property type="reaction ID" value="UER00412"/>
</dbReference>
<dbReference type="PRO" id="PR:Q9UTL3"/>
<dbReference type="Proteomes" id="UP000002485">
    <property type="component" value="Chromosome I"/>
</dbReference>
<dbReference type="GO" id="GO:0005737">
    <property type="term" value="C:cytoplasm"/>
    <property type="evidence" value="ECO:0000318"/>
    <property type="project" value="GO_Central"/>
</dbReference>
<dbReference type="GO" id="GO:0004751">
    <property type="term" value="F:ribose-5-phosphate isomerase activity"/>
    <property type="evidence" value="ECO:0000269"/>
    <property type="project" value="PomBase"/>
</dbReference>
<dbReference type="GO" id="GO:0006014">
    <property type="term" value="P:D-ribose metabolic process"/>
    <property type="evidence" value="ECO:0000318"/>
    <property type="project" value="GO_Central"/>
</dbReference>
<dbReference type="GO" id="GO:0009052">
    <property type="term" value="P:pentose-phosphate shunt, non-oxidative branch"/>
    <property type="evidence" value="ECO:0000269"/>
    <property type="project" value="PomBase"/>
</dbReference>
<dbReference type="CDD" id="cd01398">
    <property type="entry name" value="RPI_A"/>
    <property type="match status" value="1"/>
</dbReference>
<dbReference type="FunFam" id="3.40.50.1360:FF:000014">
    <property type="entry name" value="Ribose 5-phosphate isomerase"/>
    <property type="match status" value="1"/>
</dbReference>
<dbReference type="FunFam" id="3.30.70.260:FF:000053">
    <property type="entry name" value="Ribose-5-phosphate isomerase, putative"/>
    <property type="match status" value="1"/>
</dbReference>
<dbReference type="Gene3D" id="3.30.70.260">
    <property type="match status" value="1"/>
</dbReference>
<dbReference type="Gene3D" id="3.40.50.1360">
    <property type="match status" value="1"/>
</dbReference>
<dbReference type="InterPro" id="IPR037171">
    <property type="entry name" value="NagB/RpiA_transferase-like"/>
</dbReference>
<dbReference type="InterPro" id="IPR004788">
    <property type="entry name" value="Ribose5P_isomerase_type_A"/>
</dbReference>
<dbReference type="NCBIfam" id="NF001924">
    <property type="entry name" value="PRK00702.1"/>
    <property type="match status" value="1"/>
</dbReference>
<dbReference type="NCBIfam" id="TIGR00021">
    <property type="entry name" value="rpiA"/>
    <property type="match status" value="1"/>
</dbReference>
<dbReference type="PANTHER" id="PTHR11934">
    <property type="entry name" value="RIBOSE-5-PHOSPHATE ISOMERASE"/>
    <property type="match status" value="1"/>
</dbReference>
<dbReference type="PANTHER" id="PTHR11934:SF0">
    <property type="entry name" value="RIBOSE-5-PHOSPHATE ISOMERASE"/>
    <property type="match status" value="1"/>
</dbReference>
<dbReference type="Pfam" id="PF06026">
    <property type="entry name" value="Rib_5-P_isom_A"/>
    <property type="match status" value="1"/>
</dbReference>
<dbReference type="SUPFAM" id="SSF75445">
    <property type="entry name" value="D-ribose-5-phosphate isomerase (RpiA), lid domain"/>
    <property type="match status" value="1"/>
</dbReference>
<dbReference type="SUPFAM" id="SSF100950">
    <property type="entry name" value="NagB/RpiA/CoA transferase-like"/>
    <property type="match status" value="1"/>
</dbReference>
<accession>Q9UTL3</accession>
<gene>
    <name type="primary">rki1</name>
    <name type="ORF">SPAC144.12</name>
</gene>
<name>RPIA_SCHPO</name>
<proteinExistence type="inferred from homology"/>
<comment type="catalytic activity">
    <reaction>
        <text>aldehydo-D-ribose 5-phosphate = D-ribulose 5-phosphate</text>
        <dbReference type="Rhea" id="RHEA:14657"/>
        <dbReference type="ChEBI" id="CHEBI:58121"/>
        <dbReference type="ChEBI" id="CHEBI:58273"/>
        <dbReference type="EC" id="5.3.1.6"/>
    </reaction>
</comment>
<comment type="pathway">
    <text>Carbohydrate degradation; pentose phosphate pathway; D-ribose 5-phosphate from D-ribulose 5-phosphate (non-oxidative stage): step 1/1.</text>
</comment>
<comment type="subcellular location">
    <subcellularLocation>
        <location evidence="1">Cytoplasm</location>
    </subcellularLocation>
</comment>
<comment type="similarity">
    <text evidence="1">Belongs to the ribose 5-phosphate isomerase family.</text>
</comment>
<evidence type="ECO:0000305" key="1"/>
<organism>
    <name type="scientific">Schizosaccharomyces pombe (strain 972 / ATCC 24843)</name>
    <name type="common">Fission yeast</name>
    <dbReference type="NCBI Taxonomy" id="284812"/>
    <lineage>
        <taxon>Eukaryota</taxon>
        <taxon>Fungi</taxon>
        <taxon>Dikarya</taxon>
        <taxon>Ascomycota</taxon>
        <taxon>Taphrinomycotina</taxon>
        <taxon>Schizosaccharomycetes</taxon>
        <taxon>Schizosaccharomycetales</taxon>
        <taxon>Schizosaccharomycetaceae</taxon>
        <taxon>Schizosaccharomyces</taxon>
    </lineage>
</organism>
<feature type="chain" id="PRO_0000339892" description="Ribose-5-phosphate isomerase">
    <location>
        <begin position="1"/>
        <end position="274"/>
    </location>
</feature>
<keyword id="KW-0963">Cytoplasm</keyword>
<keyword id="KW-0413">Isomerase</keyword>
<keyword id="KW-1185">Reference proteome</keyword>
<protein>
    <recommendedName>
        <fullName>Ribose-5-phosphate isomerase</fullName>
        <ecNumber>5.3.1.6</ecNumber>
    </recommendedName>
    <alternativeName>
        <fullName>D-ribose-5-phosphate ketol-isomerase</fullName>
    </alternativeName>
    <alternativeName>
        <fullName>Phosphoriboisomerase</fullName>
    </alternativeName>
</protein>
<sequence length="274" mass="29329">MDSAEKKLDLSPIELAKRLACHMAVDENYPENPKVIGIGSGSTVVYVVERLLTKPGVDSVVFIPTGFQSKQLIVNNGLRLGDPDCYPNVDVSFDGADEVDDNLQCIKGGGACLFQEKLIAFLAKRLVIVADSRKNSHVLGEYWKKGVPIEVMPMAYASILPQLVELGAIEPKLRMGAPGKAGPVVTDNGNFIIDAHFGLIKNPKELFAKIKLLVGVVEVGLFCDMISAVYFGSKDGSVTVKKASGEKHIIPAPVTAAANEVDAKVAETNAKPLN</sequence>
<reference key="1">
    <citation type="journal article" date="2002" name="Nature">
        <title>The genome sequence of Schizosaccharomyces pombe.</title>
        <authorList>
            <person name="Wood V."/>
            <person name="Gwilliam R."/>
            <person name="Rajandream M.A."/>
            <person name="Lyne M.H."/>
            <person name="Lyne R."/>
            <person name="Stewart A."/>
            <person name="Sgouros J.G."/>
            <person name="Peat N."/>
            <person name="Hayles J."/>
            <person name="Baker S.G."/>
            <person name="Basham D."/>
            <person name="Bowman S."/>
            <person name="Brooks K."/>
            <person name="Brown D."/>
            <person name="Brown S."/>
            <person name="Chillingworth T."/>
            <person name="Churcher C.M."/>
            <person name="Collins M."/>
            <person name="Connor R."/>
            <person name="Cronin A."/>
            <person name="Davis P."/>
            <person name="Feltwell T."/>
            <person name="Fraser A."/>
            <person name="Gentles S."/>
            <person name="Goble A."/>
            <person name="Hamlin N."/>
            <person name="Harris D.E."/>
            <person name="Hidalgo J."/>
            <person name="Hodgson G."/>
            <person name="Holroyd S."/>
            <person name="Hornsby T."/>
            <person name="Howarth S."/>
            <person name="Huckle E.J."/>
            <person name="Hunt S."/>
            <person name="Jagels K."/>
            <person name="James K.D."/>
            <person name="Jones L."/>
            <person name="Jones M."/>
            <person name="Leather S."/>
            <person name="McDonald S."/>
            <person name="McLean J."/>
            <person name="Mooney P."/>
            <person name="Moule S."/>
            <person name="Mungall K.L."/>
            <person name="Murphy L.D."/>
            <person name="Niblett D."/>
            <person name="Odell C."/>
            <person name="Oliver K."/>
            <person name="O'Neil S."/>
            <person name="Pearson D."/>
            <person name="Quail M.A."/>
            <person name="Rabbinowitsch E."/>
            <person name="Rutherford K.M."/>
            <person name="Rutter S."/>
            <person name="Saunders D."/>
            <person name="Seeger K."/>
            <person name="Sharp S."/>
            <person name="Skelton J."/>
            <person name="Simmonds M.N."/>
            <person name="Squares R."/>
            <person name="Squares S."/>
            <person name="Stevens K."/>
            <person name="Taylor K."/>
            <person name="Taylor R.G."/>
            <person name="Tivey A."/>
            <person name="Walsh S.V."/>
            <person name="Warren T."/>
            <person name="Whitehead S."/>
            <person name="Woodward J.R."/>
            <person name="Volckaert G."/>
            <person name="Aert R."/>
            <person name="Robben J."/>
            <person name="Grymonprez B."/>
            <person name="Weltjens I."/>
            <person name="Vanstreels E."/>
            <person name="Rieger M."/>
            <person name="Schaefer M."/>
            <person name="Mueller-Auer S."/>
            <person name="Gabel C."/>
            <person name="Fuchs M."/>
            <person name="Duesterhoeft A."/>
            <person name="Fritzc C."/>
            <person name="Holzer E."/>
            <person name="Moestl D."/>
            <person name="Hilbert H."/>
            <person name="Borzym K."/>
            <person name="Langer I."/>
            <person name="Beck A."/>
            <person name="Lehrach H."/>
            <person name="Reinhardt R."/>
            <person name="Pohl T.M."/>
            <person name="Eger P."/>
            <person name="Zimmermann W."/>
            <person name="Wedler H."/>
            <person name="Wambutt R."/>
            <person name="Purnelle B."/>
            <person name="Goffeau A."/>
            <person name="Cadieu E."/>
            <person name="Dreano S."/>
            <person name="Gloux S."/>
            <person name="Lelaure V."/>
            <person name="Mottier S."/>
            <person name="Galibert F."/>
            <person name="Aves S.J."/>
            <person name="Xiang Z."/>
            <person name="Hunt C."/>
            <person name="Moore K."/>
            <person name="Hurst S.M."/>
            <person name="Lucas M."/>
            <person name="Rochet M."/>
            <person name="Gaillardin C."/>
            <person name="Tallada V.A."/>
            <person name="Garzon A."/>
            <person name="Thode G."/>
            <person name="Daga R.R."/>
            <person name="Cruzado L."/>
            <person name="Jimenez J."/>
            <person name="Sanchez M."/>
            <person name="del Rey F."/>
            <person name="Benito J."/>
            <person name="Dominguez A."/>
            <person name="Revuelta J.L."/>
            <person name="Moreno S."/>
            <person name="Armstrong J."/>
            <person name="Forsburg S.L."/>
            <person name="Cerutti L."/>
            <person name="Lowe T."/>
            <person name="McCombie W.R."/>
            <person name="Paulsen I."/>
            <person name="Potashkin J."/>
            <person name="Shpakovski G.V."/>
            <person name="Ussery D."/>
            <person name="Barrell B.G."/>
            <person name="Nurse P."/>
        </authorList>
    </citation>
    <scope>NUCLEOTIDE SEQUENCE [LARGE SCALE GENOMIC DNA]</scope>
    <source>
        <strain>972 / ATCC 24843</strain>
    </source>
</reference>